<dbReference type="EMBL" id="GG704911">
    <property type="protein sequence ID" value="EAS35704.2"/>
    <property type="molecule type" value="Genomic_DNA"/>
</dbReference>
<dbReference type="RefSeq" id="XP_001247287.2">
    <property type="nucleotide sequence ID" value="XM_001247286.2"/>
</dbReference>
<dbReference type="SMR" id="Q1E8Q5"/>
<dbReference type="FunCoup" id="Q1E8Q5">
    <property type="interactions" value="523"/>
</dbReference>
<dbReference type="STRING" id="246410.Q1E8Q5"/>
<dbReference type="GeneID" id="4567519"/>
<dbReference type="KEGG" id="cim:CIMG_01058"/>
<dbReference type="VEuPathDB" id="FungiDB:CIMG_01058"/>
<dbReference type="InParanoid" id="Q1E8Q5"/>
<dbReference type="OMA" id="QQPFNAK"/>
<dbReference type="OrthoDB" id="272411at2759"/>
<dbReference type="Proteomes" id="UP000001261">
    <property type="component" value="Unassembled WGS sequence"/>
</dbReference>
<dbReference type="GO" id="GO:0000329">
    <property type="term" value="C:fungal-type vacuole membrane"/>
    <property type="evidence" value="ECO:0007669"/>
    <property type="project" value="TreeGrafter"/>
</dbReference>
<dbReference type="GO" id="GO:0035658">
    <property type="term" value="C:Mon1-Ccz1 complex"/>
    <property type="evidence" value="ECO:0007669"/>
    <property type="project" value="TreeGrafter"/>
</dbReference>
<dbReference type="GO" id="GO:0032585">
    <property type="term" value="C:multivesicular body membrane"/>
    <property type="evidence" value="ECO:0007669"/>
    <property type="project" value="UniProtKB-SubCell"/>
</dbReference>
<dbReference type="GO" id="GO:0006914">
    <property type="term" value="P:autophagy"/>
    <property type="evidence" value="ECO:0007669"/>
    <property type="project" value="UniProtKB-KW"/>
</dbReference>
<dbReference type="GO" id="GO:0006623">
    <property type="term" value="P:protein targeting to vacuole"/>
    <property type="evidence" value="ECO:0007669"/>
    <property type="project" value="InterPro"/>
</dbReference>
<dbReference type="GO" id="GO:0016192">
    <property type="term" value="P:vesicle-mediated transport"/>
    <property type="evidence" value="ECO:0007669"/>
    <property type="project" value="InterPro"/>
</dbReference>
<dbReference type="InterPro" id="IPR043972">
    <property type="entry name" value="FUZ/MON1/HPS1_longin_1"/>
</dbReference>
<dbReference type="InterPro" id="IPR043971">
    <property type="entry name" value="FUZ/MON1/HPS1_longin_2"/>
</dbReference>
<dbReference type="InterPro" id="IPR043970">
    <property type="entry name" value="FUZ/MON1/HPS1_longin_3"/>
</dbReference>
<dbReference type="InterPro" id="IPR004353">
    <property type="entry name" value="Mon1"/>
</dbReference>
<dbReference type="PANTHER" id="PTHR13027">
    <property type="entry name" value="SAND PROTEIN-RELATED"/>
    <property type="match status" value="1"/>
</dbReference>
<dbReference type="PANTHER" id="PTHR13027:SF7">
    <property type="entry name" value="VACUOLAR FUSION PROTEIN MON1 HOMOLOG"/>
    <property type="match status" value="1"/>
</dbReference>
<dbReference type="Pfam" id="PF19036">
    <property type="entry name" value="Fuz_longin_1"/>
    <property type="match status" value="1"/>
</dbReference>
<dbReference type="Pfam" id="PF19037">
    <property type="entry name" value="Fuz_longin_2"/>
    <property type="match status" value="1"/>
</dbReference>
<dbReference type="Pfam" id="PF19038">
    <property type="entry name" value="Fuz_longin_3"/>
    <property type="match status" value="1"/>
</dbReference>
<dbReference type="PRINTS" id="PR01546">
    <property type="entry name" value="YEAST73DUF"/>
</dbReference>
<protein>
    <recommendedName>
        <fullName>Vacuolar fusion protein MON1</fullName>
    </recommendedName>
</protein>
<comment type="function">
    <text evidence="2">In complex with CCZ1, is required for multiple vacuole delivery pathways including the cytoplasm to vacuole transport (Cvt), autophagy, pexophagy and endocytosis. The MON1-CCZ1 complex acts at the fusion of vesicles with the vacuole, through its regulation of the SNARE complex during the coordinated priming and docking stages of fusion, and particularly at the stage of tethering/docking.</text>
</comment>
<comment type="subcellular location">
    <subcellularLocation>
        <location evidence="1">Endosome</location>
        <location evidence="1">Multivesicular body membrane</location>
        <topology evidence="1">Peripheral membrane protein</topology>
    </subcellularLocation>
    <subcellularLocation>
        <location evidence="1">Prevacuolar compartment membrane</location>
        <topology evidence="1">Peripheral membrane protein</topology>
    </subcellularLocation>
    <subcellularLocation>
        <location evidence="1">Vacuole membrane</location>
        <topology evidence="1">Peripheral membrane protein</topology>
    </subcellularLocation>
</comment>
<comment type="similarity">
    <text evidence="4">Belongs to the MON1/SAND family.</text>
</comment>
<accession>Q1E8Q5</accession>
<accession>J3KII2</accession>
<keyword id="KW-0072">Autophagy</keyword>
<keyword id="KW-0967">Endosome</keyword>
<keyword id="KW-0472">Membrane</keyword>
<keyword id="KW-0653">Protein transport</keyword>
<keyword id="KW-1185">Reference proteome</keyword>
<keyword id="KW-0813">Transport</keyword>
<keyword id="KW-0926">Vacuole</keyword>
<sequence length="640" mass="70576">MDTGKEKDRLDTENPSLIAGNTKQQATSQSSESKTKLAVEKDTDPPLPSRPTTRSATGRSKAAPDTVLSIRHASKNVLQSKPTTAVSLQDINSQTFQEGSNDIYSLLGARSGNEEAIKSKCSLSRPGSGKESDAADSASIKSVIPGEGTPVEVGSIFGDFTGAGQPQPLWDTKRKQVNIFDRSEPGLEDDDLSLDFESEFDCVEDIAADDNGDKILEEWRQKRKHYFILSAAGKPIYTRHGDDGLISPYIAIIQTIISFHQESSNPLKSFSAGRTKIVILSQGPLHLVAISRLLESDSQLRNQLDALYMQILSTLTLPALQHIFAVRPSTDLRRPLQGTESLLSSLADSFTKGSPSTLVSALECLKLRKSYRQQINSILLKSRVEPLLYGLVVAGGRLVSVIRPKKHSLHPGDLQLIFNMIFEADGVKAGGGESWIPICLPGFNSRGYLYMYVSFLDLHDHLPEDDKDINKDDAVAIILISADKESFFVLREMRDSVVQELEKSNSKNIIRAAIEKGRPATTDIVPGTVLRHFLYKSKSNVQFTMSSYSPDFTTLVARRRLLSTYHGLHSSVHSKNTHVKVQHCASRFMNSLAWVTPNFELYCVASPNSNRNALSQSANKIAQWVQQEDERVFIIGGAVF</sequence>
<reference key="1">
    <citation type="journal article" date="2009" name="Genome Res.">
        <title>Comparative genomic analyses of the human fungal pathogens Coccidioides and their relatives.</title>
        <authorList>
            <person name="Sharpton T.J."/>
            <person name="Stajich J.E."/>
            <person name="Rounsley S.D."/>
            <person name="Gardner M.J."/>
            <person name="Wortman J.R."/>
            <person name="Jordar V.S."/>
            <person name="Maiti R."/>
            <person name="Kodira C.D."/>
            <person name="Neafsey D.E."/>
            <person name="Zeng Q."/>
            <person name="Hung C.-Y."/>
            <person name="McMahan C."/>
            <person name="Muszewska A."/>
            <person name="Grynberg M."/>
            <person name="Mandel M.A."/>
            <person name="Kellner E.M."/>
            <person name="Barker B.M."/>
            <person name="Galgiani J.N."/>
            <person name="Orbach M.J."/>
            <person name="Kirkland T.N."/>
            <person name="Cole G.T."/>
            <person name="Henn M.R."/>
            <person name="Birren B.W."/>
            <person name="Taylor J.W."/>
        </authorList>
    </citation>
    <scope>NUCLEOTIDE SEQUENCE [LARGE SCALE GENOMIC DNA]</scope>
    <source>
        <strain>RS</strain>
    </source>
</reference>
<reference key="2">
    <citation type="journal article" date="2010" name="Genome Res.">
        <title>Population genomic sequencing of Coccidioides fungi reveals recent hybridization and transposon control.</title>
        <authorList>
            <person name="Neafsey D.E."/>
            <person name="Barker B.M."/>
            <person name="Sharpton T.J."/>
            <person name="Stajich J.E."/>
            <person name="Park D.J."/>
            <person name="Whiston E."/>
            <person name="Hung C.-Y."/>
            <person name="McMahan C."/>
            <person name="White J."/>
            <person name="Sykes S."/>
            <person name="Heiman D."/>
            <person name="Young S."/>
            <person name="Zeng Q."/>
            <person name="Abouelleil A."/>
            <person name="Aftuck L."/>
            <person name="Bessette D."/>
            <person name="Brown A."/>
            <person name="FitzGerald M."/>
            <person name="Lui A."/>
            <person name="Macdonald J.P."/>
            <person name="Priest M."/>
            <person name="Orbach M.J."/>
            <person name="Galgiani J.N."/>
            <person name="Kirkland T.N."/>
            <person name="Cole G.T."/>
            <person name="Birren B.W."/>
            <person name="Henn M.R."/>
            <person name="Taylor J.W."/>
            <person name="Rounsley S.D."/>
        </authorList>
    </citation>
    <scope>GENOME REANNOTATION</scope>
    <source>
        <strain>RS</strain>
    </source>
</reference>
<feature type="chain" id="PRO_0000278859" description="Vacuolar fusion protein MON1">
    <location>
        <begin position="1"/>
        <end position="640"/>
    </location>
</feature>
<feature type="region of interest" description="Disordered" evidence="3">
    <location>
        <begin position="1"/>
        <end position="66"/>
    </location>
</feature>
<feature type="compositionally biased region" description="Basic and acidic residues" evidence="3">
    <location>
        <begin position="1"/>
        <end position="12"/>
    </location>
</feature>
<feature type="compositionally biased region" description="Polar residues" evidence="3">
    <location>
        <begin position="13"/>
        <end position="32"/>
    </location>
</feature>
<feature type="compositionally biased region" description="Basic and acidic residues" evidence="3">
    <location>
        <begin position="33"/>
        <end position="44"/>
    </location>
</feature>
<name>MON1_COCIM</name>
<evidence type="ECO:0000250" key="1"/>
<evidence type="ECO:0000250" key="2">
    <source>
        <dbReference type="UniProtKB" id="P53129"/>
    </source>
</evidence>
<evidence type="ECO:0000256" key="3">
    <source>
        <dbReference type="SAM" id="MobiDB-lite"/>
    </source>
</evidence>
<evidence type="ECO:0000305" key="4"/>
<proteinExistence type="inferred from homology"/>
<organism>
    <name type="scientific">Coccidioides immitis (strain RS)</name>
    <name type="common">Valley fever fungus</name>
    <dbReference type="NCBI Taxonomy" id="246410"/>
    <lineage>
        <taxon>Eukaryota</taxon>
        <taxon>Fungi</taxon>
        <taxon>Dikarya</taxon>
        <taxon>Ascomycota</taxon>
        <taxon>Pezizomycotina</taxon>
        <taxon>Eurotiomycetes</taxon>
        <taxon>Eurotiomycetidae</taxon>
        <taxon>Onygenales</taxon>
        <taxon>Onygenaceae</taxon>
        <taxon>Coccidioides</taxon>
    </lineage>
</organism>
<gene>
    <name type="primary">MON1</name>
    <name type="ORF">CIMG_01058</name>
</gene>